<gene>
    <name evidence="1" type="primary">mnmG</name>
    <name evidence="1" type="synonym">gidA</name>
    <name type="ordered locus">GK3493</name>
</gene>
<name>MNMG_GEOKA</name>
<sequence>MDYHGGTYDVIVVGAGHAGCEAALASARIGAKTLVITLNLDMIAFMPCNPSIGGPAKGIVVREIDALGGEMAKNIDKTYIQMRMLNTGKGPAVRALRAQADKVLYQREMKKTLENQENLTLLQGKVERLIVEDGVCKGVITHTGAHYYAKAVVITTGTFLRGEIIIGDIKYSSGPNNQQPSIKLSEHLEELGFELVRFKTGTPPRVNSRTIDYSKTEIQPGDKEPRAFSYETTKYITDQLPCWLTYTTEETHRIIDENLHLSPMYSGMIKGTGPRYCPSIEDKVVRFHDKPRHQIFLEPEGRETEEVYVQGLSTSLPEHIQRKLLETIPGLEKAQLMRAGYAIEYDAIVPTQLWPTLETKLVKNLYTAGQINGTSGYEEAAGQGIMAGINAAHRALGREEIILSRSDAYIGVLIDDLVTKGTNEPYRLLTSRAEYRLLLRHDNADLRLTELGYRIGLISEERYQKFLAKKEAIEREKKRLQTVIIKPTPKVQEVIREAGGSELKDGIRAADLLRRPEMTYEHIRKLAPADEEIAPEVAEQVEIQIKYEGYIQKSLQEVERLKKMENKKIPEDIDYDAIQGLATEARQKLKQVRPLSIAQASRISGVNPADISILLVYLEQGRIARVSNE</sequence>
<reference key="1">
    <citation type="journal article" date="2004" name="Nucleic Acids Res.">
        <title>Thermoadaptation trait revealed by the genome sequence of thermophilic Geobacillus kaustophilus.</title>
        <authorList>
            <person name="Takami H."/>
            <person name="Takaki Y."/>
            <person name="Chee G.-J."/>
            <person name="Nishi S."/>
            <person name="Shimamura S."/>
            <person name="Suzuki H."/>
            <person name="Matsui S."/>
            <person name="Uchiyama I."/>
        </authorList>
    </citation>
    <scope>NUCLEOTIDE SEQUENCE [LARGE SCALE GENOMIC DNA]</scope>
    <source>
        <strain>HTA426</strain>
    </source>
</reference>
<dbReference type="EMBL" id="BA000043">
    <property type="protein sequence ID" value="BAD77778.1"/>
    <property type="molecule type" value="Genomic_DNA"/>
</dbReference>
<dbReference type="RefSeq" id="WP_011232956.1">
    <property type="nucleotide sequence ID" value="NC_006510.1"/>
</dbReference>
<dbReference type="SMR" id="Q5KU58"/>
<dbReference type="STRING" id="235909.GK3493"/>
<dbReference type="GeneID" id="32065370"/>
<dbReference type="KEGG" id="gka:GK3493"/>
<dbReference type="eggNOG" id="COG0445">
    <property type="taxonomic scope" value="Bacteria"/>
</dbReference>
<dbReference type="HOGENOM" id="CLU_007831_2_2_9"/>
<dbReference type="Proteomes" id="UP000001172">
    <property type="component" value="Chromosome"/>
</dbReference>
<dbReference type="GO" id="GO:0005829">
    <property type="term" value="C:cytosol"/>
    <property type="evidence" value="ECO:0007669"/>
    <property type="project" value="TreeGrafter"/>
</dbReference>
<dbReference type="GO" id="GO:0050660">
    <property type="term" value="F:flavin adenine dinucleotide binding"/>
    <property type="evidence" value="ECO:0007669"/>
    <property type="project" value="UniProtKB-UniRule"/>
</dbReference>
<dbReference type="GO" id="GO:0030488">
    <property type="term" value="P:tRNA methylation"/>
    <property type="evidence" value="ECO:0007669"/>
    <property type="project" value="TreeGrafter"/>
</dbReference>
<dbReference type="GO" id="GO:0002098">
    <property type="term" value="P:tRNA wobble uridine modification"/>
    <property type="evidence" value="ECO:0007669"/>
    <property type="project" value="InterPro"/>
</dbReference>
<dbReference type="FunFam" id="1.10.10.1800:FF:000001">
    <property type="entry name" value="tRNA uridine 5-carboxymethylaminomethyl modification enzyme MnmG"/>
    <property type="match status" value="1"/>
</dbReference>
<dbReference type="FunFam" id="1.10.150.570:FF:000001">
    <property type="entry name" value="tRNA uridine 5-carboxymethylaminomethyl modification enzyme MnmG"/>
    <property type="match status" value="1"/>
</dbReference>
<dbReference type="FunFam" id="3.50.50.60:FF:000002">
    <property type="entry name" value="tRNA uridine 5-carboxymethylaminomethyl modification enzyme MnmG"/>
    <property type="match status" value="1"/>
</dbReference>
<dbReference type="FunFam" id="3.50.50.60:FF:000063">
    <property type="entry name" value="tRNA uridine 5-carboxymethylaminomethyl modification enzyme MnmG"/>
    <property type="match status" value="1"/>
</dbReference>
<dbReference type="Gene3D" id="3.50.50.60">
    <property type="entry name" value="FAD/NAD(P)-binding domain"/>
    <property type="match status" value="2"/>
</dbReference>
<dbReference type="Gene3D" id="1.10.150.570">
    <property type="entry name" value="GidA associated domain, C-terminal subdomain"/>
    <property type="match status" value="1"/>
</dbReference>
<dbReference type="Gene3D" id="1.10.10.1800">
    <property type="entry name" value="tRNA uridine 5-carboxymethylaminomethyl modification enzyme MnmG/GidA"/>
    <property type="match status" value="1"/>
</dbReference>
<dbReference type="HAMAP" id="MF_00129">
    <property type="entry name" value="MnmG_GidA"/>
    <property type="match status" value="1"/>
</dbReference>
<dbReference type="InterPro" id="IPR036188">
    <property type="entry name" value="FAD/NAD-bd_sf"/>
</dbReference>
<dbReference type="InterPro" id="IPR049312">
    <property type="entry name" value="GIDA_C_N"/>
</dbReference>
<dbReference type="InterPro" id="IPR004416">
    <property type="entry name" value="MnmG"/>
</dbReference>
<dbReference type="InterPro" id="IPR002218">
    <property type="entry name" value="MnmG-rel"/>
</dbReference>
<dbReference type="InterPro" id="IPR020595">
    <property type="entry name" value="MnmG-rel_CS"/>
</dbReference>
<dbReference type="InterPro" id="IPR026904">
    <property type="entry name" value="MnmG_C"/>
</dbReference>
<dbReference type="InterPro" id="IPR047001">
    <property type="entry name" value="MnmG_C_subdom"/>
</dbReference>
<dbReference type="InterPro" id="IPR044920">
    <property type="entry name" value="MnmG_C_subdom_sf"/>
</dbReference>
<dbReference type="InterPro" id="IPR040131">
    <property type="entry name" value="MnmG_N"/>
</dbReference>
<dbReference type="NCBIfam" id="TIGR00136">
    <property type="entry name" value="mnmG_gidA"/>
    <property type="match status" value="1"/>
</dbReference>
<dbReference type="PANTHER" id="PTHR11806">
    <property type="entry name" value="GLUCOSE INHIBITED DIVISION PROTEIN A"/>
    <property type="match status" value="1"/>
</dbReference>
<dbReference type="PANTHER" id="PTHR11806:SF0">
    <property type="entry name" value="PROTEIN MTO1 HOMOLOG, MITOCHONDRIAL"/>
    <property type="match status" value="1"/>
</dbReference>
<dbReference type="Pfam" id="PF01134">
    <property type="entry name" value="GIDA"/>
    <property type="match status" value="1"/>
</dbReference>
<dbReference type="Pfam" id="PF21680">
    <property type="entry name" value="GIDA_C_1st"/>
    <property type="match status" value="1"/>
</dbReference>
<dbReference type="Pfam" id="PF13932">
    <property type="entry name" value="SAM_GIDA_C"/>
    <property type="match status" value="1"/>
</dbReference>
<dbReference type="PRINTS" id="PR00411">
    <property type="entry name" value="PNDRDTASEI"/>
</dbReference>
<dbReference type="SMART" id="SM01228">
    <property type="entry name" value="GIDA_assoc_3"/>
    <property type="match status" value="1"/>
</dbReference>
<dbReference type="SUPFAM" id="SSF51905">
    <property type="entry name" value="FAD/NAD(P)-binding domain"/>
    <property type="match status" value="1"/>
</dbReference>
<dbReference type="PROSITE" id="PS01280">
    <property type="entry name" value="GIDA_1"/>
    <property type="match status" value="1"/>
</dbReference>
<dbReference type="PROSITE" id="PS01281">
    <property type="entry name" value="GIDA_2"/>
    <property type="match status" value="1"/>
</dbReference>
<keyword id="KW-0963">Cytoplasm</keyword>
<keyword id="KW-0274">FAD</keyword>
<keyword id="KW-0285">Flavoprotein</keyword>
<keyword id="KW-0520">NAD</keyword>
<keyword id="KW-1185">Reference proteome</keyword>
<keyword id="KW-0819">tRNA processing</keyword>
<accession>Q5KU58</accession>
<evidence type="ECO:0000255" key="1">
    <source>
        <dbReference type="HAMAP-Rule" id="MF_00129"/>
    </source>
</evidence>
<organism>
    <name type="scientific">Geobacillus kaustophilus (strain HTA426)</name>
    <dbReference type="NCBI Taxonomy" id="235909"/>
    <lineage>
        <taxon>Bacteria</taxon>
        <taxon>Bacillati</taxon>
        <taxon>Bacillota</taxon>
        <taxon>Bacilli</taxon>
        <taxon>Bacillales</taxon>
        <taxon>Anoxybacillaceae</taxon>
        <taxon>Geobacillus</taxon>
        <taxon>Geobacillus thermoleovorans group</taxon>
    </lineage>
</organism>
<proteinExistence type="inferred from homology"/>
<feature type="chain" id="PRO_0000117105" description="tRNA uridine 5-carboxymethylaminomethyl modification enzyme MnmG">
    <location>
        <begin position="1"/>
        <end position="629"/>
    </location>
</feature>
<feature type="binding site" evidence="1">
    <location>
        <begin position="14"/>
        <end position="19"/>
    </location>
    <ligand>
        <name>FAD</name>
        <dbReference type="ChEBI" id="CHEBI:57692"/>
    </ligand>
</feature>
<feature type="binding site" evidence="1">
    <location>
        <position position="126"/>
    </location>
    <ligand>
        <name>FAD</name>
        <dbReference type="ChEBI" id="CHEBI:57692"/>
    </ligand>
</feature>
<feature type="binding site" evidence="1">
    <location>
        <position position="181"/>
    </location>
    <ligand>
        <name>FAD</name>
        <dbReference type="ChEBI" id="CHEBI:57692"/>
    </ligand>
</feature>
<feature type="binding site" evidence="1">
    <location>
        <begin position="273"/>
        <end position="287"/>
    </location>
    <ligand>
        <name>NAD(+)</name>
        <dbReference type="ChEBI" id="CHEBI:57540"/>
    </ligand>
</feature>
<feature type="binding site" evidence="1">
    <location>
        <position position="370"/>
    </location>
    <ligand>
        <name>FAD</name>
        <dbReference type="ChEBI" id="CHEBI:57692"/>
    </ligand>
</feature>
<protein>
    <recommendedName>
        <fullName evidence="1">tRNA uridine 5-carboxymethylaminomethyl modification enzyme MnmG</fullName>
    </recommendedName>
    <alternativeName>
        <fullName evidence="1">Glucose-inhibited division protein A</fullName>
    </alternativeName>
</protein>
<comment type="function">
    <text evidence="1">NAD-binding protein involved in the addition of a carboxymethylaminomethyl (cmnm) group at the wobble position (U34) of certain tRNAs, forming tRNA-cmnm(5)s(2)U34.</text>
</comment>
<comment type="cofactor">
    <cofactor evidence="1">
        <name>FAD</name>
        <dbReference type="ChEBI" id="CHEBI:57692"/>
    </cofactor>
</comment>
<comment type="subunit">
    <text evidence="1">Homodimer. Heterotetramer of two MnmE and two MnmG subunits.</text>
</comment>
<comment type="subcellular location">
    <subcellularLocation>
        <location evidence="1">Cytoplasm</location>
    </subcellularLocation>
</comment>
<comment type="similarity">
    <text evidence="1">Belongs to the MnmG family.</text>
</comment>